<accession>Q8CBC6</accession>
<accession>P97860</accession>
<reference key="1">
    <citation type="journal article" date="1996" name="Brain Res. Mol. Brain Res.">
        <title>Cloning and expression of a novel gene for a protein with leucine-rich repeats in the developing mouse nervous system.</title>
        <authorList>
            <person name="Taniguchi H."/>
            <person name="Tohyama M."/>
            <person name="Takagi T."/>
        </authorList>
    </citation>
    <scope>NUCLEOTIDE SEQUENCE [MRNA]</scope>
    <scope>TISSUE SPECIFICITY</scope>
    <source>
        <tissue>Brain</tissue>
    </source>
</reference>
<reference key="2">
    <citation type="journal article" date="2005" name="Science">
        <title>The transcriptional landscape of the mammalian genome.</title>
        <authorList>
            <person name="Carninci P."/>
            <person name="Kasukawa T."/>
            <person name="Katayama S."/>
            <person name="Gough J."/>
            <person name="Frith M.C."/>
            <person name="Maeda N."/>
            <person name="Oyama R."/>
            <person name="Ravasi T."/>
            <person name="Lenhard B."/>
            <person name="Wells C."/>
            <person name="Kodzius R."/>
            <person name="Shimokawa K."/>
            <person name="Bajic V.B."/>
            <person name="Brenner S.E."/>
            <person name="Batalov S."/>
            <person name="Forrest A.R."/>
            <person name="Zavolan M."/>
            <person name="Davis M.J."/>
            <person name="Wilming L.G."/>
            <person name="Aidinis V."/>
            <person name="Allen J.E."/>
            <person name="Ambesi-Impiombato A."/>
            <person name="Apweiler R."/>
            <person name="Aturaliya R.N."/>
            <person name="Bailey T.L."/>
            <person name="Bansal M."/>
            <person name="Baxter L."/>
            <person name="Beisel K.W."/>
            <person name="Bersano T."/>
            <person name="Bono H."/>
            <person name="Chalk A.M."/>
            <person name="Chiu K.P."/>
            <person name="Choudhary V."/>
            <person name="Christoffels A."/>
            <person name="Clutterbuck D.R."/>
            <person name="Crowe M.L."/>
            <person name="Dalla E."/>
            <person name="Dalrymple B.P."/>
            <person name="de Bono B."/>
            <person name="Della Gatta G."/>
            <person name="di Bernardo D."/>
            <person name="Down T."/>
            <person name="Engstrom P."/>
            <person name="Fagiolini M."/>
            <person name="Faulkner G."/>
            <person name="Fletcher C.F."/>
            <person name="Fukushima T."/>
            <person name="Furuno M."/>
            <person name="Futaki S."/>
            <person name="Gariboldi M."/>
            <person name="Georgii-Hemming P."/>
            <person name="Gingeras T.R."/>
            <person name="Gojobori T."/>
            <person name="Green R.E."/>
            <person name="Gustincich S."/>
            <person name="Harbers M."/>
            <person name="Hayashi Y."/>
            <person name="Hensch T.K."/>
            <person name="Hirokawa N."/>
            <person name="Hill D."/>
            <person name="Huminiecki L."/>
            <person name="Iacono M."/>
            <person name="Ikeo K."/>
            <person name="Iwama A."/>
            <person name="Ishikawa T."/>
            <person name="Jakt M."/>
            <person name="Kanapin A."/>
            <person name="Katoh M."/>
            <person name="Kawasawa Y."/>
            <person name="Kelso J."/>
            <person name="Kitamura H."/>
            <person name="Kitano H."/>
            <person name="Kollias G."/>
            <person name="Krishnan S.P."/>
            <person name="Kruger A."/>
            <person name="Kummerfeld S.K."/>
            <person name="Kurochkin I.V."/>
            <person name="Lareau L.F."/>
            <person name="Lazarevic D."/>
            <person name="Lipovich L."/>
            <person name="Liu J."/>
            <person name="Liuni S."/>
            <person name="McWilliam S."/>
            <person name="Madan Babu M."/>
            <person name="Madera M."/>
            <person name="Marchionni L."/>
            <person name="Matsuda H."/>
            <person name="Matsuzawa S."/>
            <person name="Miki H."/>
            <person name="Mignone F."/>
            <person name="Miyake S."/>
            <person name="Morris K."/>
            <person name="Mottagui-Tabar S."/>
            <person name="Mulder N."/>
            <person name="Nakano N."/>
            <person name="Nakauchi H."/>
            <person name="Ng P."/>
            <person name="Nilsson R."/>
            <person name="Nishiguchi S."/>
            <person name="Nishikawa S."/>
            <person name="Nori F."/>
            <person name="Ohara O."/>
            <person name="Okazaki Y."/>
            <person name="Orlando V."/>
            <person name="Pang K.C."/>
            <person name="Pavan W.J."/>
            <person name="Pavesi G."/>
            <person name="Pesole G."/>
            <person name="Petrovsky N."/>
            <person name="Piazza S."/>
            <person name="Reed J."/>
            <person name="Reid J.F."/>
            <person name="Ring B.Z."/>
            <person name="Ringwald M."/>
            <person name="Rost B."/>
            <person name="Ruan Y."/>
            <person name="Salzberg S.L."/>
            <person name="Sandelin A."/>
            <person name="Schneider C."/>
            <person name="Schoenbach C."/>
            <person name="Sekiguchi K."/>
            <person name="Semple C.A."/>
            <person name="Seno S."/>
            <person name="Sessa L."/>
            <person name="Sheng Y."/>
            <person name="Shibata Y."/>
            <person name="Shimada H."/>
            <person name="Shimada K."/>
            <person name="Silva D."/>
            <person name="Sinclair B."/>
            <person name="Sperling S."/>
            <person name="Stupka E."/>
            <person name="Sugiura K."/>
            <person name="Sultana R."/>
            <person name="Takenaka Y."/>
            <person name="Taki K."/>
            <person name="Tammoja K."/>
            <person name="Tan S.L."/>
            <person name="Tang S."/>
            <person name="Taylor M.S."/>
            <person name="Tegner J."/>
            <person name="Teichmann S.A."/>
            <person name="Ueda H.R."/>
            <person name="van Nimwegen E."/>
            <person name="Verardo R."/>
            <person name="Wei C.L."/>
            <person name="Yagi K."/>
            <person name="Yamanishi H."/>
            <person name="Zabarovsky E."/>
            <person name="Zhu S."/>
            <person name="Zimmer A."/>
            <person name="Hide W."/>
            <person name="Bult C."/>
            <person name="Grimmond S.M."/>
            <person name="Teasdale R.D."/>
            <person name="Liu E.T."/>
            <person name="Brusic V."/>
            <person name="Quackenbush J."/>
            <person name="Wahlestedt C."/>
            <person name="Mattick J.S."/>
            <person name="Hume D.A."/>
            <person name="Kai C."/>
            <person name="Sasaki D."/>
            <person name="Tomaru Y."/>
            <person name="Fukuda S."/>
            <person name="Kanamori-Katayama M."/>
            <person name="Suzuki M."/>
            <person name="Aoki J."/>
            <person name="Arakawa T."/>
            <person name="Iida J."/>
            <person name="Imamura K."/>
            <person name="Itoh M."/>
            <person name="Kato T."/>
            <person name="Kawaji H."/>
            <person name="Kawagashira N."/>
            <person name="Kawashima T."/>
            <person name="Kojima M."/>
            <person name="Kondo S."/>
            <person name="Konno H."/>
            <person name="Nakano K."/>
            <person name="Ninomiya N."/>
            <person name="Nishio T."/>
            <person name="Okada M."/>
            <person name="Plessy C."/>
            <person name="Shibata K."/>
            <person name="Shiraki T."/>
            <person name="Suzuki S."/>
            <person name="Tagami M."/>
            <person name="Waki K."/>
            <person name="Watahiki A."/>
            <person name="Okamura-Oho Y."/>
            <person name="Suzuki H."/>
            <person name="Kawai J."/>
            <person name="Hayashizaki Y."/>
        </authorList>
    </citation>
    <scope>NUCLEOTIDE SEQUENCE [LARGE SCALE MRNA]</scope>
    <source>
        <strain>C57BL/6J</strain>
        <tissue>Cerebellum</tissue>
    </source>
</reference>
<reference key="3">
    <citation type="journal article" date="2004" name="Genome Res.">
        <title>The status, quality, and expansion of the NIH full-length cDNA project: the Mammalian Gene Collection (MGC).</title>
        <authorList>
            <consortium name="The MGC Project Team"/>
        </authorList>
    </citation>
    <scope>NUCLEOTIDE SEQUENCE [LARGE SCALE MRNA]</scope>
    <source>
        <strain>C57BL/6J</strain>
        <tissue>Brain</tissue>
    </source>
</reference>
<proteinExistence type="evidence at transcript level"/>
<sequence>MKDTPLQVHVLLGLAITTLVQAIDKKVDCPQLCTCEIRPWFTPRSIYMEASTVDCNDLGLLNFPARLPADTQILLLQTNNIARIEHSTDFPVNLTGLDLSQNNLSSVTNINVQKMSQLLSVYLEENKLTELPEKCLYGLSNLQELYVNHNLLSTISPGAFIGLHNLLRLHLNSNRLQMINSQWFDALPNLEILMLGDNPIIRIKDMNFQPLVKLRSLVIAGINLTEIPDDALAGLENLESISFYDNRLSKVPQVALQKAVNLKFLDLNKNPINRIRRGDFSNMLHLKELGINNMPELVSIDSLAVDNLPDLRKIEATNNPRLSYIHPNAFFRLPKLESLMLNTNALSALYHGTIESLPNLKEISIHSNPIRCDCVIRWINMNKTNIRFMEPDSLFCVDPPEFQGQNVRQVHFRDMMEICLPLIAPESFPSDLDVEADSYVSLHCRATAEPQPEIYWITPSGKKLLPNTMREKFYVHSEGTLEIRGITPKEGGLYTCIATNLVGADLKSIMIKVGGSVPQDNNGSLNIKIRDIRANSVLVSWKASSKILKSSVKWTAFVKTEDSHAAQSARIPFDVKVYNLTHLKPSTEYKICIDIPTVYQKSRKQCVNVTTKSLEHDGKEYGKNHTVFVACVGGLLGIIGVMCLFSCVSQEGSSEGEHSYAVNHCHKPALAFSELYPPLINLWESSKEKRATLEVKATAIGVPTNMS</sequence>
<keyword id="KW-1015">Disulfide bond</keyword>
<keyword id="KW-0325">Glycoprotein</keyword>
<keyword id="KW-0393">Immunoglobulin domain</keyword>
<keyword id="KW-0433">Leucine-rich repeat</keyword>
<keyword id="KW-0472">Membrane</keyword>
<keyword id="KW-1185">Reference proteome</keyword>
<keyword id="KW-0677">Repeat</keyword>
<keyword id="KW-0732">Signal</keyword>
<keyword id="KW-0812">Transmembrane</keyword>
<keyword id="KW-1133">Transmembrane helix</keyword>
<evidence type="ECO:0000255" key="1"/>
<evidence type="ECO:0000255" key="2">
    <source>
        <dbReference type="PROSITE-ProRule" id="PRU00114"/>
    </source>
</evidence>
<evidence type="ECO:0000255" key="3">
    <source>
        <dbReference type="PROSITE-ProRule" id="PRU00316"/>
    </source>
</evidence>
<evidence type="ECO:0000269" key="4">
    <source>
    </source>
</evidence>
<evidence type="ECO:0000305" key="5"/>
<name>LRRN3_MOUSE</name>
<comment type="subcellular location">
    <subcellularLocation>
        <location evidence="5">Membrane</location>
        <topology evidence="5">Single-pass type I membrane protein</topology>
    </subcellularLocation>
</comment>
<comment type="tissue specificity">
    <text evidence="4">Expressed in the brain, in Stronger expression in the ventricular zone and anlage of thalamus, spinal cord, and dorsal root ganglion in 11-17 dpc cerebellum and cerebral cortex in adults.</text>
</comment>
<gene>
    <name type="primary">Lrrn3</name>
</gene>
<feature type="signal peptide" evidence="1">
    <location>
        <begin position="1"/>
        <end position="22"/>
    </location>
</feature>
<feature type="chain" id="PRO_0000045824" description="Leucine-rich repeat neuronal protein 3">
    <location>
        <begin position="23"/>
        <end position="707"/>
    </location>
</feature>
<feature type="topological domain" description="Extracellular" evidence="1">
    <location>
        <begin position="23"/>
        <end position="626"/>
    </location>
</feature>
<feature type="transmembrane region" description="Helical" evidence="1">
    <location>
        <begin position="627"/>
        <end position="647"/>
    </location>
</feature>
<feature type="topological domain" description="Cytoplasmic" evidence="1">
    <location>
        <begin position="648"/>
        <end position="707"/>
    </location>
</feature>
<feature type="domain" description="LRRNT">
    <location>
        <begin position="23"/>
        <end position="69"/>
    </location>
</feature>
<feature type="repeat" description="LRR 1">
    <location>
        <begin position="70"/>
        <end position="91"/>
    </location>
</feature>
<feature type="repeat" description="LRR 2">
    <location>
        <begin position="93"/>
        <end position="114"/>
    </location>
</feature>
<feature type="repeat" description="LRR 3">
    <location>
        <begin position="117"/>
        <end position="138"/>
    </location>
</feature>
<feature type="repeat" description="LRR 4">
    <location>
        <begin position="141"/>
        <end position="162"/>
    </location>
</feature>
<feature type="repeat" description="LRR 5">
    <location>
        <begin position="165"/>
        <end position="186"/>
    </location>
</feature>
<feature type="repeat" description="LRR 6">
    <location>
        <begin position="189"/>
        <end position="210"/>
    </location>
</feature>
<feature type="repeat" description="LRR 7">
    <location>
        <begin position="213"/>
        <end position="234"/>
    </location>
</feature>
<feature type="repeat" description="LRR 8">
    <location>
        <begin position="237"/>
        <end position="258"/>
    </location>
</feature>
<feature type="repeat" description="LRR 9">
    <location>
        <begin position="261"/>
        <end position="282"/>
    </location>
</feature>
<feature type="repeat" description="LRR 10">
    <location>
        <begin position="285"/>
        <end position="304"/>
    </location>
</feature>
<feature type="repeat" description="LRR 11">
    <location>
        <begin position="310"/>
        <end position="332"/>
    </location>
</feature>
<feature type="repeat" description="LRR 12">
    <location>
        <begin position="335"/>
        <end position="358"/>
    </location>
</feature>
<feature type="domain" description="LRRCT">
    <location>
        <begin position="368"/>
        <end position="421"/>
    </location>
</feature>
<feature type="domain" description="Ig-like C2-type">
    <location>
        <begin position="421"/>
        <end position="514"/>
    </location>
</feature>
<feature type="domain" description="Fibronectin type-III" evidence="3">
    <location>
        <begin position="523"/>
        <end position="614"/>
    </location>
</feature>
<feature type="glycosylation site" description="N-linked (GlcNAc...) asparagine" evidence="1">
    <location>
        <position position="93"/>
    </location>
</feature>
<feature type="glycosylation site" description="N-linked (GlcNAc...) asparagine" evidence="1">
    <location>
        <position position="103"/>
    </location>
</feature>
<feature type="glycosylation site" description="N-linked (GlcNAc...) asparagine" evidence="1">
    <location>
        <position position="223"/>
    </location>
</feature>
<feature type="glycosylation site" description="N-linked (GlcNAc...) asparagine" evidence="1">
    <location>
        <position position="382"/>
    </location>
</feature>
<feature type="glycosylation site" description="N-linked (GlcNAc...) asparagine" evidence="1">
    <location>
        <position position="522"/>
    </location>
</feature>
<feature type="glycosylation site" description="N-linked (GlcNAc...) asparagine" evidence="1">
    <location>
        <position position="579"/>
    </location>
</feature>
<feature type="glycosylation site" description="N-linked (GlcNAc...) asparagine" evidence="1">
    <location>
        <position position="608"/>
    </location>
</feature>
<feature type="glycosylation site" description="N-linked (GlcNAc...) asparagine" evidence="1">
    <location>
        <position position="624"/>
    </location>
</feature>
<feature type="disulfide bond" evidence="2">
    <location>
        <begin position="444"/>
        <end position="496"/>
    </location>
</feature>
<feature type="sequence conflict" description="In Ref. 1; BAA08622." evidence="5" ref="1">
    <original>S</original>
    <variation>R</variation>
    <location>
        <position position="551"/>
    </location>
</feature>
<feature type="sequence conflict" description="In Ref. 1; BAA08622." evidence="5" ref="1">
    <original>A</original>
    <variation>G</variation>
    <location>
        <position position="556"/>
    </location>
</feature>
<feature type="sequence conflict" description="In Ref. 1; BAA08622." evidence="5" ref="1">
    <original>F</original>
    <variation>S</variation>
    <location>
        <position position="573"/>
    </location>
</feature>
<feature type="sequence conflict" description="In Ref. 1; BAA08622." evidence="5" ref="1">
    <original>I</original>
    <variation>V</variation>
    <location>
        <position position="639"/>
    </location>
</feature>
<organism>
    <name type="scientific">Mus musculus</name>
    <name type="common">Mouse</name>
    <dbReference type="NCBI Taxonomy" id="10090"/>
    <lineage>
        <taxon>Eukaryota</taxon>
        <taxon>Metazoa</taxon>
        <taxon>Chordata</taxon>
        <taxon>Craniata</taxon>
        <taxon>Vertebrata</taxon>
        <taxon>Euteleostomi</taxon>
        <taxon>Mammalia</taxon>
        <taxon>Eutheria</taxon>
        <taxon>Euarchontoglires</taxon>
        <taxon>Glires</taxon>
        <taxon>Rodentia</taxon>
        <taxon>Myomorpha</taxon>
        <taxon>Muroidea</taxon>
        <taxon>Muridae</taxon>
        <taxon>Murinae</taxon>
        <taxon>Mus</taxon>
        <taxon>Mus</taxon>
    </lineage>
</organism>
<protein>
    <recommendedName>
        <fullName>Leucine-rich repeat neuronal protein 3</fullName>
    </recommendedName>
    <alternativeName>
        <fullName>Neuronal leucine-rich repeat protein 3</fullName>
        <shortName>NLRR-3</shortName>
    </alternativeName>
</protein>
<dbReference type="EMBL" id="D49802">
    <property type="protein sequence ID" value="BAA08622.1"/>
    <property type="molecule type" value="mRNA"/>
</dbReference>
<dbReference type="EMBL" id="AK036316">
    <property type="protein sequence ID" value="BAC29381.1"/>
    <property type="molecule type" value="mRNA"/>
</dbReference>
<dbReference type="EMBL" id="BC069041">
    <property type="protein sequence ID" value="AAH69041.1"/>
    <property type="molecule type" value="mRNA"/>
</dbReference>
<dbReference type="CCDS" id="CCDS25896.1"/>
<dbReference type="RefSeq" id="NP_001258637.1">
    <property type="nucleotide sequence ID" value="NM_001271708.1"/>
</dbReference>
<dbReference type="RefSeq" id="NP_001258638.1">
    <property type="nucleotide sequence ID" value="NM_001271709.1"/>
</dbReference>
<dbReference type="RefSeq" id="NP_034863.1">
    <property type="nucleotide sequence ID" value="NM_010733.3"/>
</dbReference>
<dbReference type="SMR" id="Q8CBC6"/>
<dbReference type="FunCoup" id="Q8CBC6">
    <property type="interactions" value="45"/>
</dbReference>
<dbReference type="STRING" id="10090.ENSMUSP00000043818"/>
<dbReference type="GlyConnect" id="2472">
    <property type="glycosylation" value="1 N-Linked glycan (1 site)"/>
</dbReference>
<dbReference type="GlyCosmos" id="Q8CBC6">
    <property type="glycosylation" value="8 sites, 1 glycan"/>
</dbReference>
<dbReference type="GlyGen" id="Q8CBC6">
    <property type="glycosylation" value="8 sites, 4 N-linked glycans (5 sites)"/>
</dbReference>
<dbReference type="iPTMnet" id="Q8CBC6"/>
<dbReference type="PhosphoSitePlus" id="Q8CBC6"/>
<dbReference type="SwissPalm" id="Q8CBC6"/>
<dbReference type="PaxDb" id="10090-ENSMUSP00000043818"/>
<dbReference type="ProteomicsDB" id="292117"/>
<dbReference type="Antibodypedia" id="31483">
    <property type="antibodies" value="173 antibodies from 22 providers"/>
</dbReference>
<dbReference type="DNASU" id="16981"/>
<dbReference type="Ensembl" id="ENSMUST00000043884.6">
    <property type="protein sequence ID" value="ENSMUSP00000043818.5"/>
    <property type="gene ID" value="ENSMUSG00000036295.6"/>
</dbReference>
<dbReference type="GeneID" id="16981"/>
<dbReference type="KEGG" id="mmu:16981"/>
<dbReference type="UCSC" id="uc007nln.2">
    <property type="organism name" value="mouse"/>
</dbReference>
<dbReference type="AGR" id="MGI:106036"/>
<dbReference type="CTD" id="54674"/>
<dbReference type="MGI" id="MGI:106036">
    <property type="gene designation" value="Lrrn3"/>
</dbReference>
<dbReference type="VEuPathDB" id="HostDB:ENSMUSG00000036295"/>
<dbReference type="eggNOG" id="KOG0619">
    <property type="taxonomic scope" value="Eukaryota"/>
</dbReference>
<dbReference type="GeneTree" id="ENSGT00940000160513"/>
<dbReference type="HOGENOM" id="CLU_000288_18_18_1"/>
<dbReference type="InParanoid" id="Q8CBC6"/>
<dbReference type="OMA" id="DKFYMHP"/>
<dbReference type="OrthoDB" id="676979at2759"/>
<dbReference type="PhylomeDB" id="Q8CBC6"/>
<dbReference type="TreeFam" id="TF334360"/>
<dbReference type="BioGRID-ORCS" id="16981">
    <property type="hits" value="3 hits in 76 CRISPR screens"/>
</dbReference>
<dbReference type="ChiTaRS" id="Lrrn3">
    <property type="organism name" value="mouse"/>
</dbReference>
<dbReference type="PRO" id="PR:Q8CBC6"/>
<dbReference type="Proteomes" id="UP000000589">
    <property type="component" value="Chromosome 12"/>
</dbReference>
<dbReference type="RNAct" id="Q8CBC6">
    <property type="molecule type" value="protein"/>
</dbReference>
<dbReference type="Bgee" id="ENSMUSG00000036295">
    <property type="expression patterns" value="Expressed in superior cervical ganglion and 198 other cell types or tissues"/>
</dbReference>
<dbReference type="GO" id="GO:0016020">
    <property type="term" value="C:membrane"/>
    <property type="evidence" value="ECO:0007669"/>
    <property type="project" value="UniProtKB-SubCell"/>
</dbReference>
<dbReference type="GO" id="GO:0051965">
    <property type="term" value="P:positive regulation of synapse assembly"/>
    <property type="evidence" value="ECO:0000314"/>
    <property type="project" value="MGI"/>
</dbReference>
<dbReference type="CDD" id="cd00063">
    <property type="entry name" value="FN3"/>
    <property type="match status" value="1"/>
</dbReference>
<dbReference type="FunFam" id="2.60.40.10:FF:000355">
    <property type="entry name" value="Leucine-rich repeat neuronal protein 1"/>
    <property type="match status" value="1"/>
</dbReference>
<dbReference type="FunFam" id="2.60.40.10:FF:000481">
    <property type="entry name" value="Leucine-rich repeat neuronal protein 1"/>
    <property type="match status" value="1"/>
</dbReference>
<dbReference type="FunFam" id="3.80.10.10:FF:000056">
    <property type="entry name" value="Leucine-rich repeat neuronal protein 1"/>
    <property type="match status" value="1"/>
</dbReference>
<dbReference type="FunFam" id="3.80.10.10:FF:000074">
    <property type="entry name" value="Leucine-rich repeat neuronal protein 1"/>
    <property type="match status" value="1"/>
</dbReference>
<dbReference type="Gene3D" id="2.60.40.10">
    <property type="entry name" value="Immunoglobulins"/>
    <property type="match status" value="2"/>
</dbReference>
<dbReference type="Gene3D" id="3.80.10.10">
    <property type="entry name" value="Ribonuclease Inhibitor"/>
    <property type="match status" value="3"/>
</dbReference>
<dbReference type="InterPro" id="IPR000483">
    <property type="entry name" value="Cys-rich_flank_reg_C"/>
</dbReference>
<dbReference type="InterPro" id="IPR003961">
    <property type="entry name" value="FN3_dom"/>
</dbReference>
<dbReference type="InterPro" id="IPR036116">
    <property type="entry name" value="FN3_sf"/>
</dbReference>
<dbReference type="InterPro" id="IPR007110">
    <property type="entry name" value="Ig-like_dom"/>
</dbReference>
<dbReference type="InterPro" id="IPR036179">
    <property type="entry name" value="Ig-like_dom_sf"/>
</dbReference>
<dbReference type="InterPro" id="IPR013783">
    <property type="entry name" value="Ig-like_fold"/>
</dbReference>
<dbReference type="InterPro" id="IPR013098">
    <property type="entry name" value="Ig_I-set"/>
</dbReference>
<dbReference type="InterPro" id="IPR003599">
    <property type="entry name" value="Ig_sub"/>
</dbReference>
<dbReference type="InterPro" id="IPR003598">
    <property type="entry name" value="Ig_sub2"/>
</dbReference>
<dbReference type="InterPro" id="IPR001611">
    <property type="entry name" value="Leu-rich_rpt"/>
</dbReference>
<dbReference type="InterPro" id="IPR003591">
    <property type="entry name" value="Leu-rich_rpt_typical-subtyp"/>
</dbReference>
<dbReference type="InterPro" id="IPR032675">
    <property type="entry name" value="LRR_dom_sf"/>
</dbReference>
<dbReference type="InterPro" id="IPR000372">
    <property type="entry name" value="LRRNT"/>
</dbReference>
<dbReference type="PANTHER" id="PTHR24366">
    <property type="entry name" value="IG(IMMUNOGLOBULIN) AND LRR(LEUCINE RICH REPEAT) DOMAINS"/>
    <property type="match status" value="1"/>
</dbReference>
<dbReference type="PANTHER" id="PTHR24366:SF73">
    <property type="entry name" value="LEUCINE-RICH REPEAT NEURONAL 3A"/>
    <property type="match status" value="1"/>
</dbReference>
<dbReference type="Pfam" id="PF00041">
    <property type="entry name" value="fn3"/>
    <property type="match status" value="1"/>
</dbReference>
<dbReference type="Pfam" id="PF07679">
    <property type="entry name" value="I-set"/>
    <property type="match status" value="1"/>
</dbReference>
<dbReference type="Pfam" id="PF13855">
    <property type="entry name" value="LRR_8"/>
    <property type="match status" value="3"/>
</dbReference>
<dbReference type="SMART" id="SM00409">
    <property type="entry name" value="IG"/>
    <property type="match status" value="1"/>
</dbReference>
<dbReference type="SMART" id="SM00408">
    <property type="entry name" value="IGc2"/>
    <property type="match status" value="1"/>
</dbReference>
<dbReference type="SMART" id="SM00365">
    <property type="entry name" value="LRR_SD22"/>
    <property type="match status" value="4"/>
</dbReference>
<dbReference type="SMART" id="SM00369">
    <property type="entry name" value="LRR_TYP"/>
    <property type="match status" value="8"/>
</dbReference>
<dbReference type="SMART" id="SM00082">
    <property type="entry name" value="LRRCT"/>
    <property type="match status" value="1"/>
</dbReference>
<dbReference type="SMART" id="SM00013">
    <property type="entry name" value="LRRNT"/>
    <property type="match status" value="1"/>
</dbReference>
<dbReference type="SUPFAM" id="SSF49265">
    <property type="entry name" value="Fibronectin type III"/>
    <property type="match status" value="1"/>
</dbReference>
<dbReference type="SUPFAM" id="SSF48726">
    <property type="entry name" value="Immunoglobulin"/>
    <property type="match status" value="1"/>
</dbReference>
<dbReference type="SUPFAM" id="SSF52058">
    <property type="entry name" value="L domain-like"/>
    <property type="match status" value="1"/>
</dbReference>
<dbReference type="PROSITE" id="PS50853">
    <property type="entry name" value="FN3"/>
    <property type="match status" value="1"/>
</dbReference>
<dbReference type="PROSITE" id="PS50835">
    <property type="entry name" value="IG_LIKE"/>
    <property type="match status" value="1"/>
</dbReference>
<dbReference type="PROSITE" id="PS51450">
    <property type="entry name" value="LRR"/>
    <property type="match status" value="9"/>
</dbReference>